<proteinExistence type="predicted"/>
<dbReference type="EMBL" id="AJ235271">
    <property type="protein sequence ID" value="CAA14858.1"/>
    <property type="molecule type" value="Genomic_DNA"/>
</dbReference>
<dbReference type="PIR" id="H71697">
    <property type="entry name" value="H71697"/>
</dbReference>
<dbReference type="RefSeq" id="NP_220782.1">
    <property type="nucleotide sequence ID" value="NC_000963.1"/>
</dbReference>
<dbReference type="RefSeq" id="WP_010886284.1">
    <property type="nucleotide sequence ID" value="NC_000963.1"/>
</dbReference>
<dbReference type="STRING" id="272947.gene:17555481"/>
<dbReference type="EnsemblBacteria" id="CAA14858">
    <property type="protein sequence ID" value="CAA14858"/>
    <property type="gene ID" value="CAA14858"/>
</dbReference>
<dbReference type="KEGG" id="rpr:RP401"/>
<dbReference type="PATRIC" id="fig|272947.5.peg.414"/>
<dbReference type="HOGENOM" id="CLU_075555_0_0_5"/>
<dbReference type="OrthoDB" id="7161234at2"/>
<dbReference type="Proteomes" id="UP000002480">
    <property type="component" value="Chromosome"/>
</dbReference>
<feature type="chain" id="PRO_0000101363" description="Uncharacterized protein RP401">
    <location>
        <begin position="1"/>
        <end position="247"/>
    </location>
</feature>
<accession>Q9ZDD0</accession>
<organism>
    <name type="scientific">Rickettsia prowazekii (strain Madrid E)</name>
    <dbReference type="NCBI Taxonomy" id="272947"/>
    <lineage>
        <taxon>Bacteria</taxon>
        <taxon>Pseudomonadati</taxon>
        <taxon>Pseudomonadota</taxon>
        <taxon>Alphaproteobacteria</taxon>
        <taxon>Rickettsiales</taxon>
        <taxon>Rickettsiaceae</taxon>
        <taxon>Rickettsieae</taxon>
        <taxon>Rickettsia</taxon>
        <taxon>typhus group</taxon>
    </lineage>
</organism>
<protein>
    <recommendedName>
        <fullName>Uncharacterized protein RP401</fullName>
    </recommendedName>
</protein>
<keyword id="KW-1185">Reference proteome</keyword>
<gene>
    <name type="ordered locus">RP401</name>
</gene>
<reference key="1">
    <citation type="journal article" date="1998" name="Nature">
        <title>The genome sequence of Rickettsia prowazekii and the origin of mitochondria.</title>
        <authorList>
            <person name="Andersson S.G.E."/>
            <person name="Zomorodipour A."/>
            <person name="Andersson J.O."/>
            <person name="Sicheritz-Ponten T."/>
            <person name="Alsmark U.C.M."/>
            <person name="Podowski R.M."/>
            <person name="Naeslund A.K."/>
            <person name="Eriksson A.-S."/>
            <person name="Winkler H.H."/>
            <person name="Kurland C.G."/>
        </authorList>
    </citation>
    <scope>NUCLEOTIDE SEQUENCE [LARGE SCALE GENOMIC DNA]</scope>
    <source>
        <strain>Madrid E</strain>
    </source>
</reference>
<sequence length="247" mass="28125">MQQIEKYIKKKRNATDVQVKKYKQALTEIGIKYDYEFAHVAVPNHATGRFEYFKWDWMTSTTSSHSEIVEIFKEIVMILQEAKNNQTQYENFASRLDSNTKDILAFNIKQHNIPIIHLSQNELVRKALAEAEYCTKTSDVTAAFKNYFSKLNPDGVVEFMNCAKGTTINVDGCIGTSLLDNAVNIKYPATWNGIFTQNFFIENGITNPYASFEDKIDKTVQEDSVNKSTIEEVQIEQVELIGGASDC</sequence>
<name>Y401_RICPR</name>